<proteinExistence type="evidence at transcript level"/>
<comment type="function">
    <text evidence="1">Functions as a negative regulator of MYRF in oligodendrocyte differentiation and myelination. Interacts with the C-terminal of MYRF inhibiting MYRF self-cleavage and N-fragment nuclear translocation. The secreted form promotes differentiation of T helper 1 cells (Th1).</text>
</comment>
<comment type="subunit">
    <text evidence="1">Interacts (via N-terminal region) with MYRF; the interaction inhibits MYRF self-cleavage.</text>
</comment>
<comment type="subcellular location">
    <subcellularLocation>
        <location evidence="1">Endoplasmic reticulum membrane</location>
        <topology evidence="2">Single-pass type II membrane protein</topology>
    </subcellularLocation>
    <subcellularLocation>
        <location evidence="2">Cell membrane</location>
        <topology evidence="2">Single-pass type II membrane protein</topology>
    </subcellularLocation>
    <subcellularLocation>
        <location evidence="1">Secreted</location>
    </subcellularLocation>
    <subcellularLocation>
        <location evidence="2">Secreted</location>
        <location evidence="2">Extracellular exosome</location>
    </subcellularLocation>
    <text evidence="2">Secreted by exosomes through a non-classical pathway.</text>
</comment>
<comment type="similarity">
    <text evidence="5">Belongs to the TMEM98 family.</text>
</comment>
<sequence length="226" mass="24572">METVVIVAIGVLATIFLASFAALVVVCRQRYCRPRDLLQCYDSKPIVDLIGAMETQSEPSELELDDVVITNPHIEAILENEDWIEDASGLMSHCIAILKICHTLTEKLVAMTMGSGAKMKTSASLSDIIVVAKRISPRVDDVVKSMYPPLDPKLLDARTTALLLSVSHLVLVTRNACHLTGGLDWIDQSLTAAEEHLEVLREAALASEPDKGLPGPEGFLQEQSAI</sequence>
<dbReference type="EMBL" id="BC113208">
    <property type="protein sequence ID" value="AAI13209.1"/>
    <property type="molecule type" value="mRNA"/>
</dbReference>
<dbReference type="RefSeq" id="NP_001039611.1">
    <property type="nucleotide sequence ID" value="NM_001046146.1"/>
</dbReference>
<dbReference type="SMR" id="Q2HJB9"/>
<dbReference type="FunCoup" id="Q2HJB9">
    <property type="interactions" value="141"/>
</dbReference>
<dbReference type="STRING" id="9913.ENSBTAP00000011732"/>
<dbReference type="PaxDb" id="9913-ENSBTAP00000011732"/>
<dbReference type="GeneID" id="513445"/>
<dbReference type="KEGG" id="bta:513445"/>
<dbReference type="CTD" id="26022"/>
<dbReference type="eggNOG" id="ENOG502QT8U">
    <property type="taxonomic scope" value="Eukaryota"/>
</dbReference>
<dbReference type="InParanoid" id="Q2HJB9"/>
<dbReference type="OrthoDB" id="5978425at2759"/>
<dbReference type="Proteomes" id="UP000009136">
    <property type="component" value="Unplaced"/>
</dbReference>
<dbReference type="GO" id="GO:0005783">
    <property type="term" value="C:endoplasmic reticulum"/>
    <property type="evidence" value="ECO:0000318"/>
    <property type="project" value="GO_Central"/>
</dbReference>
<dbReference type="GO" id="GO:0005789">
    <property type="term" value="C:endoplasmic reticulum membrane"/>
    <property type="evidence" value="ECO:0000250"/>
    <property type="project" value="UniProtKB"/>
</dbReference>
<dbReference type="GO" id="GO:0070062">
    <property type="term" value="C:extracellular exosome"/>
    <property type="evidence" value="ECO:0000250"/>
    <property type="project" value="UniProtKB"/>
</dbReference>
<dbReference type="GO" id="GO:0005615">
    <property type="term" value="C:extracellular space"/>
    <property type="evidence" value="ECO:0000250"/>
    <property type="project" value="UniProtKB"/>
</dbReference>
<dbReference type="GO" id="GO:0005886">
    <property type="term" value="C:plasma membrane"/>
    <property type="evidence" value="ECO:0000250"/>
    <property type="project" value="UniProtKB"/>
</dbReference>
<dbReference type="GO" id="GO:0031642">
    <property type="term" value="P:negative regulation of myelination"/>
    <property type="evidence" value="ECO:0000250"/>
    <property type="project" value="UniProtKB"/>
</dbReference>
<dbReference type="GO" id="GO:0048715">
    <property type="term" value="P:negative regulation of oligodendrocyte differentiation"/>
    <property type="evidence" value="ECO:0000250"/>
    <property type="project" value="UniProtKB"/>
</dbReference>
<dbReference type="GO" id="GO:1900181">
    <property type="term" value="P:negative regulation of protein localization to nucleus"/>
    <property type="evidence" value="ECO:0000250"/>
    <property type="project" value="UniProtKB"/>
</dbReference>
<dbReference type="GO" id="GO:0010955">
    <property type="term" value="P:negative regulation of protein processing"/>
    <property type="evidence" value="ECO:0000250"/>
    <property type="project" value="UniProtKB"/>
</dbReference>
<dbReference type="GO" id="GO:0045063">
    <property type="term" value="P:T-helper 1 cell differentiation"/>
    <property type="evidence" value="ECO:0000250"/>
    <property type="project" value="UniProtKB"/>
</dbReference>
<dbReference type="FunFam" id="1.20.1410.10:FF:000003">
    <property type="entry name" value="Transmembrane protein 98"/>
    <property type="match status" value="1"/>
</dbReference>
<dbReference type="Gene3D" id="1.20.1410.10">
    <property type="entry name" value="I/LWEQ domain"/>
    <property type="match status" value="1"/>
</dbReference>
<dbReference type="InterPro" id="IPR029668">
    <property type="entry name" value="TMEM98"/>
</dbReference>
<dbReference type="PANTHER" id="PTHR32510">
    <property type="entry name" value="TRANSMEMBRANE PROTEIN 98"/>
    <property type="match status" value="1"/>
</dbReference>
<dbReference type="PANTHER" id="PTHR32510:SF3">
    <property type="entry name" value="TRANSMEMBRANE PROTEIN 98"/>
    <property type="match status" value="1"/>
</dbReference>
<keyword id="KW-1003">Cell membrane</keyword>
<keyword id="KW-0256">Endoplasmic reticulum</keyword>
<keyword id="KW-0472">Membrane</keyword>
<keyword id="KW-1185">Reference proteome</keyword>
<keyword id="KW-0964">Secreted</keyword>
<keyword id="KW-0812">Transmembrane</keyword>
<keyword id="KW-1133">Transmembrane helix</keyword>
<reference key="1">
    <citation type="submission" date="2006-02" db="EMBL/GenBank/DDBJ databases">
        <authorList>
            <consortium name="NIH - Mammalian Gene Collection (MGC) project"/>
        </authorList>
    </citation>
    <scope>NUCLEOTIDE SEQUENCE [LARGE SCALE MRNA]</scope>
    <source>
        <strain>Hereford</strain>
        <tissue>Uterus</tissue>
    </source>
</reference>
<protein>
    <recommendedName>
        <fullName>Transmembrane protein 98</fullName>
    </recommendedName>
</protein>
<feature type="chain" id="PRO_0000251710" description="Transmembrane protein 98">
    <location>
        <begin position="1"/>
        <end position="226"/>
    </location>
</feature>
<feature type="topological domain" description="Cytoplasmic" evidence="2">
    <location>
        <begin position="1"/>
        <end position="3"/>
    </location>
</feature>
<feature type="transmembrane region" description="Helical" evidence="3">
    <location>
        <begin position="4"/>
        <end position="24"/>
    </location>
</feature>
<feature type="topological domain" description="Extracellular" evidence="2">
    <location>
        <begin position="25"/>
        <end position="226"/>
    </location>
</feature>
<feature type="region of interest" description="Required for interaction with MYRF" evidence="1">
    <location>
        <begin position="1"/>
        <end position="88"/>
    </location>
</feature>
<feature type="region of interest" description="Disordered" evidence="4">
    <location>
        <begin position="207"/>
        <end position="226"/>
    </location>
</feature>
<organism>
    <name type="scientific">Bos taurus</name>
    <name type="common">Bovine</name>
    <dbReference type="NCBI Taxonomy" id="9913"/>
    <lineage>
        <taxon>Eukaryota</taxon>
        <taxon>Metazoa</taxon>
        <taxon>Chordata</taxon>
        <taxon>Craniata</taxon>
        <taxon>Vertebrata</taxon>
        <taxon>Euteleostomi</taxon>
        <taxon>Mammalia</taxon>
        <taxon>Eutheria</taxon>
        <taxon>Laurasiatheria</taxon>
        <taxon>Artiodactyla</taxon>
        <taxon>Ruminantia</taxon>
        <taxon>Pecora</taxon>
        <taxon>Bovidae</taxon>
        <taxon>Bovinae</taxon>
        <taxon>Bos</taxon>
    </lineage>
</organism>
<accession>Q2HJB9</accession>
<name>TMM98_BOVIN</name>
<evidence type="ECO:0000250" key="1">
    <source>
        <dbReference type="UniProtKB" id="Q91X86"/>
    </source>
</evidence>
<evidence type="ECO:0000250" key="2">
    <source>
        <dbReference type="UniProtKB" id="Q9Y2Y6"/>
    </source>
</evidence>
<evidence type="ECO:0000255" key="3"/>
<evidence type="ECO:0000256" key="4">
    <source>
        <dbReference type="SAM" id="MobiDB-lite"/>
    </source>
</evidence>
<evidence type="ECO:0000305" key="5"/>
<gene>
    <name type="primary">TMEM98</name>
</gene>